<dbReference type="EMBL" id="AAFI02000032">
    <property type="protein sequence ID" value="EAL67595.1"/>
    <property type="molecule type" value="Genomic_DNA"/>
</dbReference>
<dbReference type="RefSeq" id="XP_641569.1">
    <property type="nucleotide sequence ID" value="XM_636477.1"/>
</dbReference>
<dbReference type="SMR" id="Q54WI4"/>
<dbReference type="FunCoup" id="Q54WI4">
    <property type="interactions" value="1063"/>
</dbReference>
<dbReference type="STRING" id="44689.Q54WI4"/>
<dbReference type="PaxDb" id="44689-DDB0302359"/>
<dbReference type="EnsemblProtists" id="EAL67595">
    <property type="protein sequence ID" value="EAL67595"/>
    <property type="gene ID" value="DDB_G0279641"/>
</dbReference>
<dbReference type="GeneID" id="8622144"/>
<dbReference type="KEGG" id="ddi:DDB_G0279641"/>
<dbReference type="dictyBase" id="DDB_G0279641">
    <property type="gene designation" value="sae1"/>
</dbReference>
<dbReference type="VEuPathDB" id="AmoebaDB:DDB_G0279641"/>
<dbReference type="eggNOG" id="KOG2014">
    <property type="taxonomic scope" value="Eukaryota"/>
</dbReference>
<dbReference type="HOGENOM" id="CLU_002556_4_1_1"/>
<dbReference type="InParanoid" id="Q54WI4"/>
<dbReference type="OMA" id="EFFGQFD"/>
<dbReference type="PhylomeDB" id="Q54WI4"/>
<dbReference type="Reactome" id="R-DDI-3065676">
    <property type="pathway name" value="SUMO is conjugated to E1 (UBA2:SAE1)"/>
</dbReference>
<dbReference type="Reactome" id="R-DDI-3065678">
    <property type="pathway name" value="SUMO is transferred from E1 to E2 (UBE2I, UBC9)"/>
</dbReference>
<dbReference type="UniPathway" id="UPA00886"/>
<dbReference type="PRO" id="PR:Q54WI4"/>
<dbReference type="Proteomes" id="UP000002195">
    <property type="component" value="Chromosome 3"/>
</dbReference>
<dbReference type="GO" id="GO:0005737">
    <property type="term" value="C:cytoplasm"/>
    <property type="evidence" value="ECO:0000318"/>
    <property type="project" value="GO_Central"/>
</dbReference>
<dbReference type="GO" id="GO:0031510">
    <property type="term" value="C:SUMO activating enzyme complex"/>
    <property type="evidence" value="ECO:0000250"/>
    <property type="project" value="dictyBase"/>
</dbReference>
<dbReference type="GO" id="GO:0019948">
    <property type="term" value="F:SUMO activating enzyme activity"/>
    <property type="evidence" value="ECO:0000250"/>
    <property type="project" value="dictyBase"/>
</dbReference>
<dbReference type="GO" id="GO:0016925">
    <property type="term" value="P:protein sumoylation"/>
    <property type="evidence" value="ECO:0000250"/>
    <property type="project" value="dictyBase"/>
</dbReference>
<dbReference type="FunFam" id="3.40.50.720:FF:001495">
    <property type="entry name" value="SUMO-activating enzyme subunit 1"/>
    <property type="match status" value="1"/>
</dbReference>
<dbReference type="Gene3D" id="3.40.50.720">
    <property type="entry name" value="NAD(P)-binding Rossmann-like Domain"/>
    <property type="match status" value="1"/>
</dbReference>
<dbReference type="InterPro" id="IPR045886">
    <property type="entry name" value="ThiF/MoeB/HesA"/>
</dbReference>
<dbReference type="InterPro" id="IPR000594">
    <property type="entry name" value="ThiF_NAD_FAD-bd"/>
</dbReference>
<dbReference type="InterPro" id="IPR035985">
    <property type="entry name" value="Ubiquitin-activating_enz"/>
</dbReference>
<dbReference type="InterPro" id="IPR000011">
    <property type="entry name" value="UBQ/SUMO-activ_enz_E1-like"/>
</dbReference>
<dbReference type="PANTHER" id="PTHR10953:SF162">
    <property type="entry name" value="SUMO-ACTIVATING ENZYME SUBUNIT 1"/>
    <property type="match status" value="1"/>
</dbReference>
<dbReference type="PANTHER" id="PTHR10953">
    <property type="entry name" value="UBIQUITIN-ACTIVATING ENZYME E1"/>
    <property type="match status" value="1"/>
</dbReference>
<dbReference type="Pfam" id="PF00899">
    <property type="entry name" value="ThiF"/>
    <property type="match status" value="1"/>
</dbReference>
<dbReference type="PRINTS" id="PR01849">
    <property type="entry name" value="UBIQUITINACT"/>
</dbReference>
<dbReference type="SUPFAM" id="SSF69572">
    <property type="entry name" value="Activating enzymes of the ubiquitin-like proteins"/>
    <property type="match status" value="1"/>
</dbReference>
<gene>
    <name type="primary">sae1</name>
    <name type="synonym">uble1a</name>
    <name type="ORF">DDB_G0279641</name>
</gene>
<organism>
    <name type="scientific">Dictyostelium discoideum</name>
    <name type="common">Social amoeba</name>
    <dbReference type="NCBI Taxonomy" id="44689"/>
    <lineage>
        <taxon>Eukaryota</taxon>
        <taxon>Amoebozoa</taxon>
        <taxon>Evosea</taxon>
        <taxon>Eumycetozoa</taxon>
        <taxon>Dictyostelia</taxon>
        <taxon>Dictyosteliales</taxon>
        <taxon>Dictyosteliaceae</taxon>
        <taxon>Dictyostelium</taxon>
    </lineage>
</organism>
<feature type="chain" id="PRO_0000328138" description="SUMO-activating enzyme subunit 1">
    <location>
        <begin position="1"/>
        <end position="330"/>
    </location>
</feature>
<proteinExistence type="inferred from homology"/>
<comment type="function">
    <text evidence="1">The dimeric enzyme acts as an E1 ligase for sumo. It mediates ATP-dependent activation of sumo and formation of a thioester with a conserved cysteine residue on sae2 (By similarity).</text>
</comment>
<comment type="pathway">
    <text>Protein modification; protein sumoylation.</text>
</comment>
<comment type="subunit">
    <text evidence="1">Heterodimer of sae1 and sae2. The complex binds sumo via sae2 (By similarity).</text>
</comment>
<comment type="subcellular location">
    <subcellularLocation>
        <location evidence="1">Nucleus</location>
    </subcellularLocation>
</comment>
<comment type="similarity">
    <text evidence="2">Belongs to the ubiquitin-activating E1 family.</text>
</comment>
<evidence type="ECO:0000250" key="1"/>
<evidence type="ECO:0000305" key="2"/>
<protein>
    <recommendedName>
        <fullName>SUMO-activating enzyme subunit 1</fullName>
    </recommendedName>
    <alternativeName>
        <fullName>Ubiquitin-like 1-activating enzyme E1A</fullName>
    </alternativeName>
</protein>
<sequence>MTNPENTPMTTTNEGGKGLTEYEAKIYDRSIRLWGVDAQAKLRQSKVLFIGINGLMSEIIKNVVLAGVDSITLVDDHIITTSDLSAHLFINEDSVGKVISTESVFAISELNPLVTIDVYDKEIETMDDQFIKNYTMVVISDKNLNNVSKVNSLCRKNNVSFIFSHSFGLKGLFFSDLNEFKYFTKTTTEPPKTETHISIFKSFKESMGYDWSKTNSRTPLPFFALSTLYQFEEKHNRVPDNISDSDLSELKSIINSSIEKFNLKNTDSNKYFEETKDLLNKMNIEISPVCAIVGGIVGAEIIKIITQNMQVLNNFFFYDGVKGTGLVEQF</sequence>
<accession>Q54WI4</accession>
<keyword id="KW-0539">Nucleus</keyword>
<keyword id="KW-1185">Reference proteome</keyword>
<keyword id="KW-0833">Ubl conjugation pathway</keyword>
<reference key="1">
    <citation type="journal article" date="2005" name="Nature">
        <title>The genome of the social amoeba Dictyostelium discoideum.</title>
        <authorList>
            <person name="Eichinger L."/>
            <person name="Pachebat J.A."/>
            <person name="Gloeckner G."/>
            <person name="Rajandream M.A."/>
            <person name="Sucgang R."/>
            <person name="Berriman M."/>
            <person name="Song J."/>
            <person name="Olsen R."/>
            <person name="Szafranski K."/>
            <person name="Xu Q."/>
            <person name="Tunggal B."/>
            <person name="Kummerfeld S."/>
            <person name="Madera M."/>
            <person name="Konfortov B.A."/>
            <person name="Rivero F."/>
            <person name="Bankier A.T."/>
            <person name="Lehmann R."/>
            <person name="Hamlin N."/>
            <person name="Davies R."/>
            <person name="Gaudet P."/>
            <person name="Fey P."/>
            <person name="Pilcher K."/>
            <person name="Chen G."/>
            <person name="Saunders D."/>
            <person name="Sodergren E.J."/>
            <person name="Davis P."/>
            <person name="Kerhornou A."/>
            <person name="Nie X."/>
            <person name="Hall N."/>
            <person name="Anjard C."/>
            <person name="Hemphill L."/>
            <person name="Bason N."/>
            <person name="Farbrother P."/>
            <person name="Desany B."/>
            <person name="Just E."/>
            <person name="Morio T."/>
            <person name="Rost R."/>
            <person name="Churcher C.M."/>
            <person name="Cooper J."/>
            <person name="Haydock S."/>
            <person name="van Driessche N."/>
            <person name="Cronin A."/>
            <person name="Goodhead I."/>
            <person name="Muzny D.M."/>
            <person name="Mourier T."/>
            <person name="Pain A."/>
            <person name="Lu M."/>
            <person name="Harper D."/>
            <person name="Lindsay R."/>
            <person name="Hauser H."/>
            <person name="James K.D."/>
            <person name="Quiles M."/>
            <person name="Madan Babu M."/>
            <person name="Saito T."/>
            <person name="Buchrieser C."/>
            <person name="Wardroper A."/>
            <person name="Felder M."/>
            <person name="Thangavelu M."/>
            <person name="Johnson D."/>
            <person name="Knights A."/>
            <person name="Loulseged H."/>
            <person name="Mungall K.L."/>
            <person name="Oliver K."/>
            <person name="Price C."/>
            <person name="Quail M.A."/>
            <person name="Urushihara H."/>
            <person name="Hernandez J."/>
            <person name="Rabbinowitsch E."/>
            <person name="Steffen D."/>
            <person name="Sanders M."/>
            <person name="Ma J."/>
            <person name="Kohara Y."/>
            <person name="Sharp S."/>
            <person name="Simmonds M.N."/>
            <person name="Spiegler S."/>
            <person name="Tivey A."/>
            <person name="Sugano S."/>
            <person name="White B."/>
            <person name="Walker D."/>
            <person name="Woodward J.R."/>
            <person name="Winckler T."/>
            <person name="Tanaka Y."/>
            <person name="Shaulsky G."/>
            <person name="Schleicher M."/>
            <person name="Weinstock G.M."/>
            <person name="Rosenthal A."/>
            <person name="Cox E.C."/>
            <person name="Chisholm R.L."/>
            <person name="Gibbs R.A."/>
            <person name="Loomis W.F."/>
            <person name="Platzer M."/>
            <person name="Kay R.R."/>
            <person name="Williams J.G."/>
            <person name="Dear P.H."/>
            <person name="Noegel A.A."/>
            <person name="Barrell B.G."/>
            <person name="Kuspa A."/>
        </authorList>
    </citation>
    <scope>NUCLEOTIDE SEQUENCE [LARGE SCALE GENOMIC DNA]</scope>
    <source>
        <strain>AX4</strain>
    </source>
</reference>
<name>SAE1_DICDI</name>